<accession>Q0HP01</accession>
<sequence length="217" mass="22949">MNQSLLAPFGTAIERVEAGLEALRQGQGVLVVDDEDRENEGDLIFAAESLTNAQMAMLIRECSGIVCLCLPDEKVKALELPPMVENNSSQYGTAFTVSIEAKVGVTTGVSAADRVTTIKAAIADNAKPSDLARPGHVYPLRAQPGGVLTRRGHTEGTIDLMQLAGLKPAGVLCEVTNPDGTMARLPEIIAFGAAHNMPVLTIEDIVVYRKSLLANVG</sequence>
<name>RIBB_SHESM</name>
<reference key="1">
    <citation type="submission" date="2006-08" db="EMBL/GenBank/DDBJ databases">
        <title>Complete sequence of Shewanella sp. MR-4.</title>
        <authorList>
            <consortium name="US DOE Joint Genome Institute"/>
            <person name="Copeland A."/>
            <person name="Lucas S."/>
            <person name="Lapidus A."/>
            <person name="Barry K."/>
            <person name="Detter J.C."/>
            <person name="Glavina del Rio T."/>
            <person name="Hammon N."/>
            <person name="Israni S."/>
            <person name="Dalin E."/>
            <person name="Tice H."/>
            <person name="Pitluck S."/>
            <person name="Kiss H."/>
            <person name="Brettin T."/>
            <person name="Bruce D."/>
            <person name="Han C."/>
            <person name="Tapia R."/>
            <person name="Gilna P."/>
            <person name="Schmutz J."/>
            <person name="Larimer F."/>
            <person name="Land M."/>
            <person name="Hauser L."/>
            <person name="Kyrpides N."/>
            <person name="Mikhailova N."/>
            <person name="Nealson K."/>
            <person name="Konstantinidis K."/>
            <person name="Klappenbach J."/>
            <person name="Tiedje J."/>
            <person name="Richardson P."/>
        </authorList>
    </citation>
    <scope>NUCLEOTIDE SEQUENCE [LARGE SCALE GENOMIC DNA]</scope>
    <source>
        <strain>MR-4</strain>
    </source>
</reference>
<gene>
    <name evidence="1" type="primary">ribB</name>
    <name type="ordered locus">Shewmr4_0135</name>
</gene>
<protein>
    <recommendedName>
        <fullName evidence="1">3,4-dihydroxy-2-butanone 4-phosphate synthase</fullName>
        <shortName evidence="1">DHBP synthase</shortName>
        <ecNumber evidence="1">4.1.99.12</ecNumber>
    </recommendedName>
</protein>
<keyword id="KW-0456">Lyase</keyword>
<keyword id="KW-0460">Magnesium</keyword>
<keyword id="KW-0464">Manganese</keyword>
<keyword id="KW-0479">Metal-binding</keyword>
<keyword id="KW-0686">Riboflavin biosynthesis</keyword>
<comment type="function">
    <text evidence="1">Catalyzes the conversion of D-ribulose 5-phosphate to formate and 3,4-dihydroxy-2-butanone 4-phosphate.</text>
</comment>
<comment type="catalytic activity">
    <reaction evidence="1">
        <text>D-ribulose 5-phosphate = (2S)-2-hydroxy-3-oxobutyl phosphate + formate + H(+)</text>
        <dbReference type="Rhea" id="RHEA:18457"/>
        <dbReference type="ChEBI" id="CHEBI:15378"/>
        <dbReference type="ChEBI" id="CHEBI:15740"/>
        <dbReference type="ChEBI" id="CHEBI:58121"/>
        <dbReference type="ChEBI" id="CHEBI:58830"/>
        <dbReference type="EC" id="4.1.99.12"/>
    </reaction>
</comment>
<comment type="cofactor">
    <cofactor evidence="1">
        <name>Mg(2+)</name>
        <dbReference type="ChEBI" id="CHEBI:18420"/>
    </cofactor>
    <cofactor evidence="1">
        <name>Mn(2+)</name>
        <dbReference type="ChEBI" id="CHEBI:29035"/>
    </cofactor>
    <text evidence="1">Binds 2 divalent metal cations per subunit. Magnesium or manganese.</text>
</comment>
<comment type="pathway">
    <text evidence="1">Cofactor biosynthesis; riboflavin biosynthesis; 2-hydroxy-3-oxobutyl phosphate from D-ribulose 5-phosphate: step 1/1.</text>
</comment>
<comment type="subunit">
    <text evidence="1">Homodimer.</text>
</comment>
<comment type="similarity">
    <text evidence="1">Belongs to the DHBP synthase family.</text>
</comment>
<evidence type="ECO:0000255" key="1">
    <source>
        <dbReference type="HAMAP-Rule" id="MF_00180"/>
    </source>
</evidence>
<dbReference type="EC" id="4.1.99.12" evidence="1"/>
<dbReference type="EMBL" id="CP000446">
    <property type="protein sequence ID" value="ABI37216.1"/>
    <property type="molecule type" value="Genomic_DNA"/>
</dbReference>
<dbReference type="RefSeq" id="WP_011620968.1">
    <property type="nucleotide sequence ID" value="NC_008321.1"/>
</dbReference>
<dbReference type="SMR" id="Q0HP01"/>
<dbReference type="KEGG" id="she:Shewmr4_0135"/>
<dbReference type="HOGENOM" id="CLU_020273_3_0_6"/>
<dbReference type="UniPathway" id="UPA00275">
    <property type="reaction ID" value="UER00399"/>
</dbReference>
<dbReference type="GO" id="GO:0005829">
    <property type="term" value="C:cytosol"/>
    <property type="evidence" value="ECO:0007669"/>
    <property type="project" value="TreeGrafter"/>
</dbReference>
<dbReference type="GO" id="GO:0008686">
    <property type="term" value="F:3,4-dihydroxy-2-butanone-4-phosphate synthase activity"/>
    <property type="evidence" value="ECO:0007669"/>
    <property type="project" value="UniProtKB-UniRule"/>
</dbReference>
<dbReference type="GO" id="GO:0000287">
    <property type="term" value="F:magnesium ion binding"/>
    <property type="evidence" value="ECO:0007669"/>
    <property type="project" value="UniProtKB-UniRule"/>
</dbReference>
<dbReference type="GO" id="GO:0030145">
    <property type="term" value="F:manganese ion binding"/>
    <property type="evidence" value="ECO:0007669"/>
    <property type="project" value="UniProtKB-UniRule"/>
</dbReference>
<dbReference type="GO" id="GO:0009231">
    <property type="term" value="P:riboflavin biosynthetic process"/>
    <property type="evidence" value="ECO:0007669"/>
    <property type="project" value="UniProtKB-UniRule"/>
</dbReference>
<dbReference type="FunFam" id="3.90.870.10:FF:000002">
    <property type="entry name" value="3,4-dihydroxy-2-butanone 4-phosphate synthase"/>
    <property type="match status" value="1"/>
</dbReference>
<dbReference type="Gene3D" id="3.90.870.10">
    <property type="entry name" value="DHBP synthase"/>
    <property type="match status" value="1"/>
</dbReference>
<dbReference type="HAMAP" id="MF_00180">
    <property type="entry name" value="RibB"/>
    <property type="match status" value="1"/>
</dbReference>
<dbReference type="InterPro" id="IPR017945">
    <property type="entry name" value="DHBP_synth_RibB-like_a/b_dom"/>
</dbReference>
<dbReference type="InterPro" id="IPR000422">
    <property type="entry name" value="DHBP_synthase_RibB"/>
</dbReference>
<dbReference type="NCBIfam" id="TIGR00506">
    <property type="entry name" value="ribB"/>
    <property type="match status" value="1"/>
</dbReference>
<dbReference type="PANTHER" id="PTHR21327:SF38">
    <property type="entry name" value="3,4-DIHYDROXY-2-BUTANONE 4-PHOSPHATE SYNTHASE"/>
    <property type="match status" value="1"/>
</dbReference>
<dbReference type="PANTHER" id="PTHR21327">
    <property type="entry name" value="GTP CYCLOHYDROLASE II-RELATED"/>
    <property type="match status" value="1"/>
</dbReference>
<dbReference type="Pfam" id="PF00926">
    <property type="entry name" value="DHBP_synthase"/>
    <property type="match status" value="1"/>
</dbReference>
<dbReference type="SUPFAM" id="SSF55821">
    <property type="entry name" value="YrdC/RibB"/>
    <property type="match status" value="1"/>
</dbReference>
<organism>
    <name type="scientific">Shewanella sp. (strain MR-4)</name>
    <dbReference type="NCBI Taxonomy" id="60480"/>
    <lineage>
        <taxon>Bacteria</taxon>
        <taxon>Pseudomonadati</taxon>
        <taxon>Pseudomonadota</taxon>
        <taxon>Gammaproteobacteria</taxon>
        <taxon>Alteromonadales</taxon>
        <taxon>Shewanellaceae</taxon>
        <taxon>Shewanella</taxon>
    </lineage>
</organism>
<feature type="chain" id="PRO_1000040631" description="3,4-dihydroxy-2-butanone 4-phosphate synthase">
    <location>
        <begin position="1"/>
        <end position="217"/>
    </location>
</feature>
<feature type="binding site" evidence="1">
    <location>
        <begin position="37"/>
        <end position="38"/>
    </location>
    <ligand>
        <name>D-ribulose 5-phosphate</name>
        <dbReference type="ChEBI" id="CHEBI:58121"/>
    </ligand>
</feature>
<feature type="binding site" evidence="1">
    <location>
        <position position="38"/>
    </location>
    <ligand>
        <name>Mg(2+)</name>
        <dbReference type="ChEBI" id="CHEBI:18420"/>
        <label>1</label>
    </ligand>
</feature>
<feature type="binding site" evidence="1">
    <location>
        <position position="38"/>
    </location>
    <ligand>
        <name>Mg(2+)</name>
        <dbReference type="ChEBI" id="CHEBI:18420"/>
        <label>2</label>
    </ligand>
</feature>
<feature type="binding site" evidence="1">
    <location>
        <position position="42"/>
    </location>
    <ligand>
        <name>D-ribulose 5-phosphate</name>
        <dbReference type="ChEBI" id="CHEBI:58121"/>
    </ligand>
</feature>
<feature type="binding site" evidence="1">
    <location>
        <begin position="150"/>
        <end position="154"/>
    </location>
    <ligand>
        <name>D-ribulose 5-phosphate</name>
        <dbReference type="ChEBI" id="CHEBI:58121"/>
    </ligand>
</feature>
<feature type="binding site" evidence="1">
    <location>
        <position position="153"/>
    </location>
    <ligand>
        <name>Mg(2+)</name>
        <dbReference type="ChEBI" id="CHEBI:18420"/>
        <label>2</label>
    </ligand>
</feature>
<feature type="binding site" evidence="1">
    <location>
        <position position="174"/>
    </location>
    <ligand>
        <name>D-ribulose 5-phosphate</name>
        <dbReference type="ChEBI" id="CHEBI:58121"/>
    </ligand>
</feature>
<feature type="site" description="Essential for catalytic activity" evidence="1">
    <location>
        <position position="136"/>
    </location>
</feature>
<feature type="site" description="Essential for catalytic activity" evidence="1">
    <location>
        <position position="174"/>
    </location>
</feature>
<proteinExistence type="inferred from homology"/>